<feature type="chain" id="PRO_1000215438" description="Formate--tetrahydrofolate ligase">
    <location>
        <begin position="1"/>
        <end position="560"/>
    </location>
</feature>
<feature type="binding site" evidence="1">
    <location>
        <begin position="69"/>
        <end position="76"/>
    </location>
    <ligand>
        <name>ATP</name>
        <dbReference type="ChEBI" id="CHEBI:30616"/>
    </ligand>
</feature>
<dbReference type="EC" id="6.3.4.3" evidence="1"/>
<dbReference type="EMBL" id="FM242711">
    <property type="protein sequence ID" value="CAS05651.1"/>
    <property type="molecule type" value="Genomic_DNA"/>
</dbReference>
<dbReference type="RefSeq" id="WP_003728274.1">
    <property type="nucleotide sequence ID" value="NC_012488.1"/>
</dbReference>
<dbReference type="SMR" id="C1KWH6"/>
<dbReference type="KEGG" id="lmc:Lm4b_01893"/>
<dbReference type="HOGENOM" id="CLU_003601_3_3_9"/>
<dbReference type="UniPathway" id="UPA00193"/>
<dbReference type="GO" id="GO:0005524">
    <property type="term" value="F:ATP binding"/>
    <property type="evidence" value="ECO:0007669"/>
    <property type="project" value="UniProtKB-UniRule"/>
</dbReference>
<dbReference type="GO" id="GO:0004329">
    <property type="term" value="F:formate-tetrahydrofolate ligase activity"/>
    <property type="evidence" value="ECO:0007669"/>
    <property type="project" value="UniProtKB-UniRule"/>
</dbReference>
<dbReference type="GO" id="GO:0035999">
    <property type="term" value="P:tetrahydrofolate interconversion"/>
    <property type="evidence" value="ECO:0007669"/>
    <property type="project" value="UniProtKB-UniRule"/>
</dbReference>
<dbReference type="CDD" id="cd00477">
    <property type="entry name" value="FTHFS"/>
    <property type="match status" value="1"/>
</dbReference>
<dbReference type="FunFam" id="3.30.1510.10:FF:000001">
    <property type="entry name" value="Formate--tetrahydrofolate ligase"/>
    <property type="match status" value="1"/>
</dbReference>
<dbReference type="FunFam" id="3.10.410.10:FF:000001">
    <property type="entry name" value="Putative formate--tetrahydrofolate ligase"/>
    <property type="match status" value="1"/>
</dbReference>
<dbReference type="Gene3D" id="3.30.1510.10">
    <property type="entry name" value="Domain 2, N(10)-formyltetrahydrofolate synthetase"/>
    <property type="match status" value="1"/>
</dbReference>
<dbReference type="Gene3D" id="3.10.410.10">
    <property type="entry name" value="Formyltetrahydrofolate synthetase, domain 3"/>
    <property type="match status" value="1"/>
</dbReference>
<dbReference type="Gene3D" id="3.40.50.300">
    <property type="entry name" value="P-loop containing nucleotide triphosphate hydrolases"/>
    <property type="match status" value="1"/>
</dbReference>
<dbReference type="HAMAP" id="MF_01543">
    <property type="entry name" value="FTHFS"/>
    <property type="match status" value="1"/>
</dbReference>
<dbReference type="InterPro" id="IPR000559">
    <property type="entry name" value="Formate_THF_ligase"/>
</dbReference>
<dbReference type="InterPro" id="IPR020628">
    <property type="entry name" value="Formate_THF_ligase_CS"/>
</dbReference>
<dbReference type="InterPro" id="IPR027417">
    <property type="entry name" value="P-loop_NTPase"/>
</dbReference>
<dbReference type="NCBIfam" id="NF010030">
    <property type="entry name" value="PRK13505.1"/>
    <property type="match status" value="1"/>
</dbReference>
<dbReference type="Pfam" id="PF01268">
    <property type="entry name" value="FTHFS"/>
    <property type="match status" value="1"/>
</dbReference>
<dbReference type="SUPFAM" id="SSF52540">
    <property type="entry name" value="P-loop containing nucleoside triphosphate hydrolases"/>
    <property type="match status" value="1"/>
</dbReference>
<dbReference type="PROSITE" id="PS00721">
    <property type="entry name" value="FTHFS_1"/>
    <property type="match status" value="1"/>
</dbReference>
<dbReference type="PROSITE" id="PS00722">
    <property type="entry name" value="FTHFS_2"/>
    <property type="match status" value="1"/>
</dbReference>
<keyword id="KW-0067">ATP-binding</keyword>
<keyword id="KW-0436">Ligase</keyword>
<keyword id="KW-0547">Nucleotide-binding</keyword>
<keyword id="KW-0554">One-carbon metabolism</keyword>
<evidence type="ECO:0000255" key="1">
    <source>
        <dbReference type="HAMAP-Rule" id="MF_01543"/>
    </source>
</evidence>
<sequence length="560" mass="60126">MSNKVKSDIEIASKAEILPVTTIAEHLGLDADALELYGKYKAKLSYDTIHSLKDKEPGKLVLVTAINPTPAGEGKSTVTVGLGDALSKKDKKTVIALREPSLGPTMGIKGGATGGGYAQVIPMEDINLHFTGDFHAITAANNALSAFIDNHMQQGNDLDIDGRRIVWKRVVDLNDRALRKVVVGLGGPIQGVPREDGFDITVASEIMAIICLASDLKDLKKRLSEIVIGYNYKKEPITVGEMGYEGALTLLLKDALKPNLVQTLEHTPAIVHGGPFANIAHGCNSVSATSTALRLGEYVVTEAGFGADLGAEKFLDIKVPALGKAPDCVVIVATIRALKMHGGALKTELSEENVDALAKGFTNLQKHTESIQTFGIPYVVAINKFITDSDAEVAKLEALCEEHGIPFSLTEVWEKGGDGGLELADKVIAAVESGEADYKRIYDDAWSIEEKLEAIVTKVYGGIGVELSSKAQKQIVEFKKYGWDRYPICMAKTQYSLSDDPTLLGRPTDFVIHIREFIPKLGAGFVVALTGDVMTMPGLPKKPAALNMDVDENGNAQGLF</sequence>
<gene>
    <name evidence="1" type="primary">fhs</name>
    <name type="ordered locus">Lm4b_01893</name>
</gene>
<organism>
    <name type="scientific">Listeria monocytogenes serotype 4b (strain CLIP80459)</name>
    <dbReference type="NCBI Taxonomy" id="568819"/>
    <lineage>
        <taxon>Bacteria</taxon>
        <taxon>Bacillati</taxon>
        <taxon>Bacillota</taxon>
        <taxon>Bacilli</taxon>
        <taxon>Bacillales</taxon>
        <taxon>Listeriaceae</taxon>
        <taxon>Listeria</taxon>
    </lineage>
</organism>
<comment type="catalytic activity">
    <reaction evidence="1">
        <text>(6S)-5,6,7,8-tetrahydrofolate + formate + ATP = (6R)-10-formyltetrahydrofolate + ADP + phosphate</text>
        <dbReference type="Rhea" id="RHEA:20221"/>
        <dbReference type="ChEBI" id="CHEBI:15740"/>
        <dbReference type="ChEBI" id="CHEBI:30616"/>
        <dbReference type="ChEBI" id="CHEBI:43474"/>
        <dbReference type="ChEBI" id="CHEBI:57453"/>
        <dbReference type="ChEBI" id="CHEBI:195366"/>
        <dbReference type="ChEBI" id="CHEBI:456216"/>
        <dbReference type="EC" id="6.3.4.3"/>
    </reaction>
</comment>
<comment type="pathway">
    <text evidence="1">One-carbon metabolism; tetrahydrofolate interconversion.</text>
</comment>
<comment type="similarity">
    <text evidence="1">Belongs to the formate--tetrahydrofolate ligase family.</text>
</comment>
<protein>
    <recommendedName>
        <fullName evidence="1">Formate--tetrahydrofolate ligase</fullName>
        <ecNumber evidence="1">6.3.4.3</ecNumber>
    </recommendedName>
    <alternativeName>
        <fullName evidence="1">Formyltetrahydrofolate synthetase</fullName>
        <shortName evidence="1">FHS</shortName>
        <shortName evidence="1">FTHFS</shortName>
    </alternativeName>
</protein>
<reference key="1">
    <citation type="journal article" date="2012" name="BMC Genomics">
        <title>Comparative genomics and transcriptomics of lineages I, II, and III strains of Listeria monocytogenes.</title>
        <authorList>
            <person name="Hain T."/>
            <person name="Ghai R."/>
            <person name="Billion A."/>
            <person name="Kuenne C.T."/>
            <person name="Steinweg C."/>
            <person name="Izar B."/>
            <person name="Mohamed W."/>
            <person name="Mraheil M."/>
            <person name="Domann E."/>
            <person name="Schaffrath S."/>
            <person name="Karst U."/>
            <person name="Goesmann A."/>
            <person name="Oehm S."/>
            <person name="Puhler A."/>
            <person name="Merkl R."/>
            <person name="Vorwerk S."/>
            <person name="Glaser P."/>
            <person name="Garrido P."/>
            <person name="Rusniok C."/>
            <person name="Buchrieser C."/>
            <person name="Goebel W."/>
            <person name="Chakraborty T."/>
        </authorList>
    </citation>
    <scope>NUCLEOTIDE SEQUENCE [LARGE SCALE GENOMIC DNA]</scope>
    <source>
        <strain>CLIP80459</strain>
    </source>
</reference>
<name>FTHS_LISMC</name>
<accession>C1KWH6</accession>
<proteinExistence type="inferred from homology"/>